<proteinExistence type="inferred from homology"/>
<sequence>MKIYEGKLIAEGKKFGIVVSRFNEFITNKLLEGALDALKRHGALNENIEIAWVPGAFEIPLIAKKMAESKRYDAVIALGAVIRGETPHFDYVANEVSKGIAKISLDTEVPVIFGVLTTDTIEQAIVRAGTKGGNKGFEAAVTAIEMANLMEEIK</sequence>
<comment type="function">
    <text evidence="1">Catalyzes the formation of 6,7-dimethyl-8-ribityllumazine by condensation of 5-amino-6-(D-ribitylamino)uracil with 3,4-dihydroxy-2-butanone 4-phosphate. This is the penultimate step in the biosynthesis of riboflavin.</text>
</comment>
<comment type="catalytic activity">
    <reaction evidence="1">
        <text>(2S)-2-hydroxy-3-oxobutyl phosphate + 5-amino-6-(D-ribitylamino)uracil = 6,7-dimethyl-8-(1-D-ribityl)lumazine + phosphate + 2 H2O + H(+)</text>
        <dbReference type="Rhea" id="RHEA:26152"/>
        <dbReference type="ChEBI" id="CHEBI:15377"/>
        <dbReference type="ChEBI" id="CHEBI:15378"/>
        <dbReference type="ChEBI" id="CHEBI:15934"/>
        <dbReference type="ChEBI" id="CHEBI:43474"/>
        <dbReference type="ChEBI" id="CHEBI:58201"/>
        <dbReference type="ChEBI" id="CHEBI:58830"/>
        <dbReference type="EC" id="2.5.1.78"/>
    </reaction>
</comment>
<comment type="pathway">
    <text evidence="1">Cofactor biosynthesis; riboflavin biosynthesis; riboflavin from 2-hydroxy-3-oxobutyl phosphate and 5-amino-6-(D-ribitylamino)uracil: step 1/2.</text>
</comment>
<comment type="similarity">
    <text evidence="1">Belongs to the DMRL synthase family.</text>
</comment>
<protein>
    <recommendedName>
        <fullName evidence="1">6,7-dimethyl-8-ribityllumazine synthase</fullName>
        <shortName evidence="1">DMRL synthase</shortName>
        <shortName evidence="1">LS</shortName>
        <shortName evidence="1">Lumazine synthase</shortName>
        <ecNumber evidence="1">2.5.1.78</ecNumber>
    </recommendedName>
</protein>
<feature type="chain" id="PRO_1000098244" description="6,7-dimethyl-8-ribityllumazine synthase">
    <location>
        <begin position="1"/>
        <end position="154"/>
    </location>
</feature>
<feature type="active site" description="Proton donor" evidence="1">
    <location>
        <position position="88"/>
    </location>
</feature>
<feature type="binding site" evidence="1">
    <location>
        <position position="22"/>
    </location>
    <ligand>
        <name>5-amino-6-(D-ribitylamino)uracil</name>
        <dbReference type="ChEBI" id="CHEBI:15934"/>
    </ligand>
</feature>
<feature type="binding site" evidence="1">
    <location>
        <begin position="56"/>
        <end position="58"/>
    </location>
    <ligand>
        <name>5-amino-6-(D-ribitylamino)uracil</name>
        <dbReference type="ChEBI" id="CHEBI:15934"/>
    </ligand>
</feature>
<feature type="binding site" evidence="1">
    <location>
        <begin position="80"/>
        <end position="82"/>
    </location>
    <ligand>
        <name>5-amino-6-(D-ribitylamino)uracil</name>
        <dbReference type="ChEBI" id="CHEBI:15934"/>
    </ligand>
</feature>
<feature type="binding site" evidence="1">
    <location>
        <begin position="85"/>
        <end position="86"/>
    </location>
    <ligand>
        <name>(2S)-2-hydroxy-3-oxobutyl phosphate</name>
        <dbReference type="ChEBI" id="CHEBI:58830"/>
    </ligand>
</feature>
<feature type="binding site" evidence="1">
    <location>
        <position position="113"/>
    </location>
    <ligand>
        <name>5-amino-6-(D-ribitylamino)uracil</name>
        <dbReference type="ChEBI" id="CHEBI:15934"/>
    </ligand>
</feature>
<feature type="binding site" evidence="1">
    <location>
        <position position="127"/>
    </location>
    <ligand>
        <name>(2S)-2-hydroxy-3-oxobutyl phosphate</name>
        <dbReference type="ChEBI" id="CHEBI:58830"/>
    </ligand>
</feature>
<organism>
    <name type="scientific">Thermoanaerobacter sp. (strain X514)</name>
    <dbReference type="NCBI Taxonomy" id="399726"/>
    <lineage>
        <taxon>Bacteria</taxon>
        <taxon>Bacillati</taxon>
        <taxon>Bacillota</taxon>
        <taxon>Clostridia</taxon>
        <taxon>Thermoanaerobacterales</taxon>
        <taxon>Thermoanaerobacteraceae</taxon>
        <taxon>Thermoanaerobacter</taxon>
    </lineage>
</organism>
<evidence type="ECO:0000255" key="1">
    <source>
        <dbReference type="HAMAP-Rule" id="MF_00178"/>
    </source>
</evidence>
<reference key="1">
    <citation type="submission" date="2008-01" db="EMBL/GenBank/DDBJ databases">
        <title>Complete sequence of Thermoanaerobacter sp. X514.</title>
        <authorList>
            <consortium name="US DOE Joint Genome Institute"/>
            <person name="Copeland A."/>
            <person name="Lucas S."/>
            <person name="Lapidus A."/>
            <person name="Barry K."/>
            <person name="Glavina del Rio T."/>
            <person name="Dalin E."/>
            <person name="Tice H."/>
            <person name="Pitluck S."/>
            <person name="Bruce D."/>
            <person name="Goodwin L."/>
            <person name="Saunders E."/>
            <person name="Brettin T."/>
            <person name="Detter J.C."/>
            <person name="Han C."/>
            <person name="Schmutz J."/>
            <person name="Larimer F."/>
            <person name="Land M."/>
            <person name="Hauser L."/>
            <person name="Kyrpides N."/>
            <person name="Kim E."/>
            <person name="Hemme C."/>
            <person name="Fields M.W."/>
            <person name="He Z."/>
            <person name="Zhou J."/>
            <person name="Richardson P."/>
        </authorList>
    </citation>
    <scope>NUCLEOTIDE SEQUENCE [LARGE SCALE GENOMIC DNA]</scope>
    <source>
        <strain>X514</strain>
    </source>
</reference>
<name>RISB_THEPX</name>
<dbReference type="EC" id="2.5.1.78" evidence="1"/>
<dbReference type="EMBL" id="CP000923">
    <property type="protein sequence ID" value="ABY91347.1"/>
    <property type="molecule type" value="Genomic_DNA"/>
</dbReference>
<dbReference type="SMR" id="B0K0Z0"/>
<dbReference type="KEGG" id="tex:Teth514_0023"/>
<dbReference type="HOGENOM" id="CLU_089358_1_1_9"/>
<dbReference type="UniPathway" id="UPA00275">
    <property type="reaction ID" value="UER00404"/>
</dbReference>
<dbReference type="Proteomes" id="UP000002155">
    <property type="component" value="Chromosome"/>
</dbReference>
<dbReference type="GO" id="GO:0005829">
    <property type="term" value="C:cytosol"/>
    <property type="evidence" value="ECO:0007669"/>
    <property type="project" value="TreeGrafter"/>
</dbReference>
<dbReference type="GO" id="GO:0009349">
    <property type="term" value="C:riboflavin synthase complex"/>
    <property type="evidence" value="ECO:0007669"/>
    <property type="project" value="InterPro"/>
</dbReference>
<dbReference type="GO" id="GO:0000906">
    <property type="term" value="F:6,7-dimethyl-8-ribityllumazine synthase activity"/>
    <property type="evidence" value="ECO:0007669"/>
    <property type="project" value="UniProtKB-UniRule"/>
</dbReference>
<dbReference type="GO" id="GO:0009231">
    <property type="term" value="P:riboflavin biosynthetic process"/>
    <property type="evidence" value="ECO:0007669"/>
    <property type="project" value="UniProtKB-UniRule"/>
</dbReference>
<dbReference type="CDD" id="cd09209">
    <property type="entry name" value="Lumazine_synthase-I"/>
    <property type="match status" value="1"/>
</dbReference>
<dbReference type="FunFam" id="3.40.50.960:FF:000001">
    <property type="entry name" value="6,7-dimethyl-8-ribityllumazine synthase"/>
    <property type="match status" value="1"/>
</dbReference>
<dbReference type="Gene3D" id="3.40.50.960">
    <property type="entry name" value="Lumazine/riboflavin synthase"/>
    <property type="match status" value="1"/>
</dbReference>
<dbReference type="HAMAP" id="MF_00178">
    <property type="entry name" value="Lumazine_synth"/>
    <property type="match status" value="1"/>
</dbReference>
<dbReference type="InterPro" id="IPR034964">
    <property type="entry name" value="LS"/>
</dbReference>
<dbReference type="InterPro" id="IPR002180">
    <property type="entry name" value="LS/RS"/>
</dbReference>
<dbReference type="InterPro" id="IPR036467">
    <property type="entry name" value="LS/RS_sf"/>
</dbReference>
<dbReference type="NCBIfam" id="TIGR00114">
    <property type="entry name" value="lumazine-synth"/>
    <property type="match status" value="1"/>
</dbReference>
<dbReference type="NCBIfam" id="NF000812">
    <property type="entry name" value="PRK00061.1-4"/>
    <property type="match status" value="1"/>
</dbReference>
<dbReference type="PANTHER" id="PTHR21058:SF0">
    <property type="entry name" value="6,7-DIMETHYL-8-RIBITYLLUMAZINE SYNTHASE"/>
    <property type="match status" value="1"/>
</dbReference>
<dbReference type="PANTHER" id="PTHR21058">
    <property type="entry name" value="6,7-DIMETHYL-8-RIBITYLLUMAZINE SYNTHASE DMRL SYNTHASE LUMAZINE SYNTHASE"/>
    <property type="match status" value="1"/>
</dbReference>
<dbReference type="Pfam" id="PF00885">
    <property type="entry name" value="DMRL_synthase"/>
    <property type="match status" value="1"/>
</dbReference>
<dbReference type="SUPFAM" id="SSF52121">
    <property type="entry name" value="Lumazine synthase"/>
    <property type="match status" value="1"/>
</dbReference>
<accession>B0K0Z0</accession>
<gene>
    <name evidence="1" type="primary">ribH</name>
    <name type="ordered locus">Teth514_0023</name>
</gene>
<keyword id="KW-0686">Riboflavin biosynthesis</keyword>
<keyword id="KW-0808">Transferase</keyword>